<sequence length="481" mass="55306">MMRSDISNQISQELNNTNINLNGKSFNDYKFKEPIKDYSRYLSLRNSTPCQLTEVEISTFLASSEILSFGAGIPSKLFFPIKELEFNFNFLGNEKVRLSKEDLDLVQQYSDSPGLPKLRNWCKSIQQRHHGLCDPNTPGKEWNLLMTPGSQHALDCLVKAFFNRGDTLIVERYTYGGMFAVTQPSGINFAACEMDSKGMIPSELDNLLSNWESTHPDLKFPKLIYMIPHGQNPTGILYDMERKEEIYKIACKFDLLIIEDDPHFFLQLDNEIVNGKRVLNKSFLSIDKEDRVIRLDTFSKFLSSGIRMGFVTTNSKLFGVIAFELNASIFHSSGLTQIALEKLLTNWGDEKFDSHVNFVQEVLIRKRRETIELLEKHLKGQVEYSVPKAGLYFWVKLLGIDCSYEFVRDVLRHHKVIFGLGISSSPNRTIKTPYIRVTFSYLEKEDGEVAFKTLSDCLKDYIKNKKIIKHDEDVTLYNNIS</sequence>
<proteinExistence type="inferred from homology"/>
<protein>
    <recommendedName>
        <fullName>Aromatic amino acid aminotransferase DDB_G0272014</fullName>
        <ecNumber>2.6.1.57</ecNumber>
    </recommendedName>
</protein>
<feature type="chain" id="PRO_0000331116" description="Aromatic amino acid aminotransferase DDB_G0272014">
    <location>
        <begin position="1"/>
        <end position="481"/>
    </location>
</feature>
<feature type="modified residue" description="N6-(pyridoxal phosphate)lysine" evidence="1">
    <location>
        <position position="300"/>
    </location>
</feature>
<evidence type="ECO:0000250" key="1"/>
<evidence type="ECO:0000305" key="2"/>
<dbReference type="EC" id="2.6.1.57"/>
<dbReference type="EMBL" id="AAFI02000007">
    <property type="protein sequence ID" value="EAL71441.1"/>
    <property type="molecule type" value="Genomic_DNA"/>
</dbReference>
<dbReference type="RefSeq" id="XP_645381.1">
    <property type="nucleotide sequence ID" value="XM_640289.1"/>
</dbReference>
<dbReference type="SMR" id="Q86AG8"/>
<dbReference type="FunCoup" id="Q86AG8">
    <property type="interactions" value="2"/>
</dbReference>
<dbReference type="STRING" id="44689.Q86AG8"/>
<dbReference type="PaxDb" id="44689-DDB0168619"/>
<dbReference type="EnsemblProtists" id="EAL71441">
    <property type="protein sequence ID" value="EAL71441"/>
    <property type="gene ID" value="DDB_G0272014"/>
</dbReference>
<dbReference type="GeneID" id="8618270"/>
<dbReference type="KEGG" id="ddi:DDB_G0272014"/>
<dbReference type="dictyBase" id="DDB_G0272014"/>
<dbReference type="VEuPathDB" id="AmoebaDB:DDB_G0272014"/>
<dbReference type="eggNOG" id="KOG0634">
    <property type="taxonomic scope" value="Eukaryota"/>
</dbReference>
<dbReference type="HOGENOM" id="CLU_017584_0_6_1"/>
<dbReference type="InParanoid" id="Q86AG8"/>
<dbReference type="OMA" id="GSAQFMR"/>
<dbReference type="PhylomeDB" id="Q86AG8"/>
<dbReference type="PRO" id="PR:Q86AG8"/>
<dbReference type="Proteomes" id="UP000002195">
    <property type="component" value="Chromosome 2"/>
</dbReference>
<dbReference type="GO" id="GO:0005737">
    <property type="term" value="C:cytoplasm"/>
    <property type="evidence" value="ECO:0007669"/>
    <property type="project" value="UniProtKB-SubCell"/>
</dbReference>
<dbReference type="GO" id="GO:0008793">
    <property type="term" value="F:aromatic-amino-acid transaminase activity"/>
    <property type="evidence" value="ECO:0007669"/>
    <property type="project" value="RHEA"/>
</dbReference>
<dbReference type="GO" id="GO:0030170">
    <property type="term" value="F:pyridoxal phosphate binding"/>
    <property type="evidence" value="ECO:0007669"/>
    <property type="project" value="InterPro"/>
</dbReference>
<dbReference type="GO" id="GO:0008483">
    <property type="term" value="F:transaminase activity"/>
    <property type="evidence" value="ECO:0000318"/>
    <property type="project" value="GO_Central"/>
</dbReference>
<dbReference type="GO" id="GO:1901605">
    <property type="term" value="P:alpha-amino acid metabolic process"/>
    <property type="evidence" value="ECO:0000318"/>
    <property type="project" value="GO_Central"/>
</dbReference>
<dbReference type="GO" id="GO:0009058">
    <property type="term" value="P:biosynthetic process"/>
    <property type="evidence" value="ECO:0007669"/>
    <property type="project" value="InterPro"/>
</dbReference>
<dbReference type="CDD" id="cd00609">
    <property type="entry name" value="AAT_like"/>
    <property type="match status" value="1"/>
</dbReference>
<dbReference type="FunFam" id="3.40.640.10:FF:000289">
    <property type="entry name" value="Aromatic amino acid aminotransferase DDB_G0272014"/>
    <property type="match status" value="1"/>
</dbReference>
<dbReference type="Gene3D" id="3.40.640.10">
    <property type="entry name" value="Type I PLP-dependent aspartate aminotransferase-like (Major domain)"/>
    <property type="match status" value="1"/>
</dbReference>
<dbReference type="InterPro" id="IPR004839">
    <property type="entry name" value="Aminotransferase_I/II_large"/>
</dbReference>
<dbReference type="InterPro" id="IPR050859">
    <property type="entry name" value="Class-I_PLP-dep_aminotransf"/>
</dbReference>
<dbReference type="InterPro" id="IPR015424">
    <property type="entry name" value="PyrdxlP-dep_Trfase"/>
</dbReference>
<dbReference type="InterPro" id="IPR015421">
    <property type="entry name" value="PyrdxlP-dep_Trfase_major"/>
</dbReference>
<dbReference type="PANTHER" id="PTHR42790">
    <property type="entry name" value="AMINOTRANSFERASE"/>
    <property type="match status" value="1"/>
</dbReference>
<dbReference type="PANTHER" id="PTHR42790:SF23">
    <property type="entry name" value="AROMATIC AMINO ACID AMINOTRANSFERASE DDB_G0272014"/>
    <property type="match status" value="1"/>
</dbReference>
<dbReference type="Pfam" id="PF00155">
    <property type="entry name" value="Aminotran_1_2"/>
    <property type="match status" value="1"/>
</dbReference>
<dbReference type="SUPFAM" id="SSF53383">
    <property type="entry name" value="PLP-dependent transferases"/>
    <property type="match status" value="1"/>
</dbReference>
<gene>
    <name type="ORF">DDB_G0272014</name>
</gene>
<accession>Q86AG8</accession>
<accession>Q55A85</accession>
<comment type="function">
    <text evidence="1">Has aromatic amino acid transaminase activity.</text>
</comment>
<comment type="catalytic activity">
    <reaction>
        <text>an aromatic L-alpha-amino acid + 2-oxoglutarate = an aromatic oxo-acid + L-glutamate</text>
        <dbReference type="Rhea" id="RHEA:17533"/>
        <dbReference type="ChEBI" id="CHEBI:16810"/>
        <dbReference type="ChEBI" id="CHEBI:29985"/>
        <dbReference type="ChEBI" id="CHEBI:73309"/>
        <dbReference type="ChEBI" id="CHEBI:84824"/>
        <dbReference type="EC" id="2.6.1.57"/>
    </reaction>
</comment>
<comment type="cofactor">
    <cofactor evidence="1">
        <name>pyridoxal 5'-phosphate</name>
        <dbReference type="ChEBI" id="CHEBI:597326"/>
    </cofactor>
</comment>
<comment type="subcellular location">
    <subcellularLocation>
        <location evidence="1">Cytoplasm</location>
    </subcellularLocation>
</comment>
<comment type="similarity">
    <text evidence="2">Belongs to the class-I pyridoxal-phosphate-dependent aminotransferase family.</text>
</comment>
<keyword id="KW-0032">Aminotransferase</keyword>
<keyword id="KW-0963">Cytoplasm</keyword>
<keyword id="KW-0663">Pyridoxal phosphate</keyword>
<keyword id="KW-1185">Reference proteome</keyword>
<keyword id="KW-0808">Transferase</keyword>
<name>AATR1_DICDI</name>
<organism>
    <name type="scientific">Dictyostelium discoideum</name>
    <name type="common">Social amoeba</name>
    <dbReference type="NCBI Taxonomy" id="44689"/>
    <lineage>
        <taxon>Eukaryota</taxon>
        <taxon>Amoebozoa</taxon>
        <taxon>Evosea</taxon>
        <taxon>Eumycetozoa</taxon>
        <taxon>Dictyostelia</taxon>
        <taxon>Dictyosteliales</taxon>
        <taxon>Dictyosteliaceae</taxon>
        <taxon>Dictyostelium</taxon>
    </lineage>
</organism>
<reference key="1">
    <citation type="journal article" date="2002" name="Nature">
        <title>Sequence and analysis of chromosome 2 of Dictyostelium discoideum.</title>
        <authorList>
            <person name="Gloeckner G."/>
            <person name="Eichinger L."/>
            <person name="Szafranski K."/>
            <person name="Pachebat J.A."/>
            <person name="Bankier A.T."/>
            <person name="Dear P.H."/>
            <person name="Lehmann R."/>
            <person name="Baumgart C."/>
            <person name="Parra G."/>
            <person name="Abril J.F."/>
            <person name="Guigo R."/>
            <person name="Kumpf K."/>
            <person name="Tunggal B."/>
            <person name="Cox E.C."/>
            <person name="Quail M.A."/>
            <person name="Platzer M."/>
            <person name="Rosenthal A."/>
            <person name="Noegel A.A."/>
        </authorList>
    </citation>
    <scope>NUCLEOTIDE SEQUENCE [LARGE SCALE GENOMIC DNA]</scope>
    <source>
        <strain>AX4</strain>
    </source>
</reference>
<reference key="2">
    <citation type="journal article" date="2005" name="Nature">
        <title>The genome of the social amoeba Dictyostelium discoideum.</title>
        <authorList>
            <person name="Eichinger L."/>
            <person name="Pachebat J.A."/>
            <person name="Gloeckner G."/>
            <person name="Rajandream M.A."/>
            <person name="Sucgang R."/>
            <person name="Berriman M."/>
            <person name="Song J."/>
            <person name="Olsen R."/>
            <person name="Szafranski K."/>
            <person name="Xu Q."/>
            <person name="Tunggal B."/>
            <person name="Kummerfeld S."/>
            <person name="Madera M."/>
            <person name="Konfortov B.A."/>
            <person name="Rivero F."/>
            <person name="Bankier A.T."/>
            <person name="Lehmann R."/>
            <person name="Hamlin N."/>
            <person name="Davies R."/>
            <person name="Gaudet P."/>
            <person name="Fey P."/>
            <person name="Pilcher K."/>
            <person name="Chen G."/>
            <person name="Saunders D."/>
            <person name="Sodergren E.J."/>
            <person name="Davis P."/>
            <person name="Kerhornou A."/>
            <person name="Nie X."/>
            <person name="Hall N."/>
            <person name="Anjard C."/>
            <person name="Hemphill L."/>
            <person name="Bason N."/>
            <person name="Farbrother P."/>
            <person name="Desany B."/>
            <person name="Just E."/>
            <person name="Morio T."/>
            <person name="Rost R."/>
            <person name="Churcher C.M."/>
            <person name="Cooper J."/>
            <person name="Haydock S."/>
            <person name="van Driessche N."/>
            <person name="Cronin A."/>
            <person name="Goodhead I."/>
            <person name="Muzny D.M."/>
            <person name="Mourier T."/>
            <person name="Pain A."/>
            <person name="Lu M."/>
            <person name="Harper D."/>
            <person name="Lindsay R."/>
            <person name="Hauser H."/>
            <person name="James K.D."/>
            <person name="Quiles M."/>
            <person name="Madan Babu M."/>
            <person name="Saito T."/>
            <person name="Buchrieser C."/>
            <person name="Wardroper A."/>
            <person name="Felder M."/>
            <person name="Thangavelu M."/>
            <person name="Johnson D."/>
            <person name="Knights A."/>
            <person name="Loulseged H."/>
            <person name="Mungall K.L."/>
            <person name="Oliver K."/>
            <person name="Price C."/>
            <person name="Quail M.A."/>
            <person name="Urushihara H."/>
            <person name="Hernandez J."/>
            <person name="Rabbinowitsch E."/>
            <person name="Steffen D."/>
            <person name="Sanders M."/>
            <person name="Ma J."/>
            <person name="Kohara Y."/>
            <person name="Sharp S."/>
            <person name="Simmonds M.N."/>
            <person name="Spiegler S."/>
            <person name="Tivey A."/>
            <person name="Sugano S."/>
            <person name="White B."/>
            <person name="Walker D."/>
            <person name="Woodward J.R."/>
            <person name="Winckler T."/>
            <person name="Tanaka Y."/>
            <person name="Shaulsky G."/>
            <person name="Schleicher M."/>
            <person name="Weinstock G.M."/>
            <person name="Rosenthal A."/>
            <person name="Cox E.C."/>
            <person name="Chisholm R.L."/>
            <person name="Gibbs R.A."/>
            <person name="Loomis W.F."/>
            <person name="Platzer M."/>
            <person name="Kay R.R."/>
            <person name="Williams J.G."/>
            <person name="Dear P.H."/>
            <person name="Noegel A.A."/>
            <person name="Barrell B.G."/>
            <person name="Kuspa A."/>
        </authorList>
    </citation>
    <scope>NUCLEOTIDE SEQUENCE [LARGE SCALE GENOMIC DNA]</scope>
    <source>
        <strain>AX4</strain>
    </source>
</reference>